<keyword id="KW-0215">Deoxyribonucleotide synthesis</keyword>
<keyword id="KW-0408">Iron</keyword>
<keyword id="KW-0479">Metal-binding</keyword>
<keyword id="KW-0560">Oxidoreductase</keyword>
<keyword id="KW-1185">Reference proteome</keyword>
<evidence type="ECO:0000250" key="1"/>
<evidence type="ECO:0000305" key="2"/>
<sequence>MANTKKYFLESVSPLEYAQKKFQGNLRSVNWNLVDDEKDLEVWNRITQNFWLPEKIPVSNDIPSWKQLSKEWQDLITKTFTGLTLLDTIQATIGDIKQIDYALTDHEQVIYANFAFMVGVHARSYGTIFSTLCTSEQITEAHEWVVKTESLQKRAKALIPYYTGKDPLKSKVAAALMPGFLLYGGFYLPFYLSSRKQLPNTSDIIRLILRDKVIHNYYSGYKFQRKVEKMSKEKQAEMKRFVFDLMYELIELEKAYLKELYEGFGIVEDAIKFSIYNAGKFLQNLGYDSPFTEEETRIKPEIFAQLSARADENHDFFSGNGSSYVMGISEETEDKDWDF</sequence>
<comment type="function">
    <text evidence="1">Provides the precursors necessary for DNA synthesis. Catalyzes the biosynthesis of deoxyribonucleotides from the corresponding ribonucleotides (By similarity).</text>
</comment>
<comment type="catalytic activity">
    <reaction>
        <text>a 2'-deoxyribonucleoside 5'-diphosphate + [thioredoxin]-disulfide + H2O = a ribonucleoside 5'-diphosphate + [thioredoxin]-dithiol</text>
        <dbReference type="Rhea" id="RHEA:23252"/>
        <dbReference type="Rhea" id="RHEA-COMP:10698"/>
        <dbReference type="Rhea" id="RHEA-COMP:10700"/>
        <dbReference type="ChEBI" id="CHEBI:15377"/>
        <dbReference type="ChEBI" id="CHEBI:29950"/>
        <dbReference type="ChEBI" id="CHEBI:50058"/>
        <dbReference type="ChEBI" id="CHEBI:57930"/>
        <dbReference type="ChEBI" id="CHEBI:73316"/>
        <dbReference type="EC" id="1.17.4.1"/>
    </reaction>
</comment>
<comment type="cofactor">
    <cofactor evidence="1">
        <name>Fe cation</name>
        <dbReference type="ChEBI" id="CHEBI:24875"/>
    </cofactor>
    <text evidence="1">Binds 2 iron ions per subunit.</text>
</comment>
<comment type="subunit">
    <text evidence="1">Tetramer of two alpha and two beta subunits.</text>
</comment>
<comment type="similarity">
    <text evidence="2">Belongs to the ribonucleoside diphosphate reductase small chain family.</text>
</comment>
<comment type="caution">
    <text evidence="2">Seems to lack two of the iron-binding residues.</text>
</comment>
<feature type="chain" id="PRO_0000190484" description="Ribonucleoside-diphosphate reductase subunit beta">
    <location>
        <begin position="1"/>
        <end position="339"/>
    </location>
</feature>
<feature type="active site" evidence="1">
    <location>
        <position position="125"/>
    </location>
</feature>
<feature type="binding site" evidence="1">
    <location>
        <position position="87"/>
    </location>
    <ligand>
        <name>Fe cation</name>
        <dbReference type="ChEBI" id="CHEBI:24875"/>
        <label>1</label>
    </ligand>
</feature>
<feature type="binding site" evidence="1">
    <location>
        <position position="121"/>
    </location>
    <ligand>
        <name>Fe cation</name>
        <dbReference type="ChEBI" id="CHEBI:24875"/>
        <label>1</label>
    </ligand>
</feature>
<feature type="binding site">
    <location>
        <position position="215"/>
    </location>
    <ligand>
        <name>Fe cation</name>
        <dbReference type="ChEBI" id="CHEBI:24875"/>
        <label>2</label>
    </ligand>
</feature>
<dbReference type="EC" id="1.17.4.1"/>
<dbReference type="EMBL" id="U00089">
    <property type="protein sequence ID" value="AAB96162.1"/>
    <property type="molecule type" value="Genomic_DNA"/>
</dbReference>
<dbReference type="PIR" id="S73840">
    <property type="entry name" value="S73840"/>
</dbReference>
<dbReference type="RefSeq" id="NP_110010.1">
    <property type="nucleotide sequence ID" value="NC_000912.1"/>
</dbReference>
<dbReference type="RefSeq" id="WP_010874678.1">
    <property type="nucleotide sequence ID" value="NZ_OU342337.1"/>
</dbReference>
<dbReference type="SMR" id="P75461"/>
<dbReference type="IntAct" id="P75461">
    <property type="interactions" value="4"/>
</dbReference>
<dbReference type="STRING" id="272634.MPN_322"/>
<dbReference type="EnsemblBacteria" id="AAB96162">
    <property type="protein sequence ID" value="AAB96162"/>
    <property type="gene ID" value="MPN_322"/>
</dbReference>
<dbReference type="GeneID" id="66609022"/>
<dbReference type="KEGG" id="mpn:MPN_322"/>
<dbReference type="PATRIC" id="fig|272634.6.peg.346"/>
<dbReference type="HOGENOM" id="CLU_052495_0_0_14"/>
<dbReference type="OrthoDB" id="9766544at2"/>
<dbReference type="BioCyc" id="MPNE272634:G1GJ3-513-MONOMER"/>
<dbReference type="Proteomes" id="UP000000808">
    <property type="component" value="Chromosome"/>
</dbReference>
<dbReference type="GO" id="GO:0005971">
    <property type="term" value="C:ribonucleoside-diphosphate reductase complex"/>
    <property type="evidence" value="ECO:0007669"/>
    <property type="project" value="InterPro"/>
</dbReference>
<dbReference type="GO" id="GO:0046872">
    <property type="term" value="F:metal ion binding"/>
    <property type="evidence" value="ECO:0007669"/>
    <property type="project" value="UniProtKB-KW"/>
</dbReference>
<dbReference type="GO" id="GO:0004748">
    <property type="term" value="F:ribonucleoside-diphosphate reductase activity, thioredoxin disulfide as acceptor"/>
    <property type="evidence" value="ECO:0007669"/>
    <property type="project" value="UniProtKB-EC"/>
</dbReference>
<dbReference type="GO" id="GO:0009263">
    <property type="term" value="P:deoxyribonucleotide biosynthetic process"/>
    <property type="evidence" value="ECO:0007669"/>
    <property type="project" value="UniProtKB-KW"/>
</dbReference>
<dbReference type="CDD" id="cd01049">
    <property type="entry name" value="RNRR2"/>
    <property type="match status" value="1"/>
</dbReference>
<dbReference type="Gene3D" id="1.10.620.20">
    <property type="entry name" value="Ribonucleotide Reductase, subunit A"/>
    <property type="match status" value="1"/>
</dbReference>
<dbReference type="InterPro" id="IPR009078">
    <property type="entry name" value="Ferritin-like_SF"/>
</dbReference>
<dbReference type="InterPro" id="IPR012348">
    <property type="entry name" value="RNR-like"/>
</dbReference>
<dbReference type="InterPro" id="IPR026494">
    <property type="entry name" value="RNR_NrdF-like"/>
</dbReference>
<dbReference type="InterPro" id="IPR033909">
    <property type="entry name" value="RNR_small"/>
</dbReference>
<dbReference type="InterPro" id="IPR000358">
    <property type="entry name" value="RNR_small_fam"/>
</dbReference>
<dbReference type="NCBIfam" id="NF007182">
    <property type="entry name" value="PRK09614.1-1"/>
    <property type="match status" value="1"/>
</dbReference>
<dbReference type="NCBIfam" id="NF010572">
    <property type="entry name" value="PRK13965.1"/>
    <property type="match status" value="1"/>
</dbReference>
<dbReference type="NCBIfam" id="TIGR04171">
    <property type="entry name" value="RNR_1b_NrdF"/>
    <property type="match status" value="1"/>
</dbReference>
<dbReference type="PANTHER" id="PTHR23409">
    <property type="entry name" value="RIBONUCLEOSIDE-DIPHOSPHATE REDUCTASE SMALL CHAIN"/>
    <property type="match status" value="1"/>
</dbReference>
<dbReference type="PANTHER" id="PTHR23409:SF18">
    <property type="entry name" value="RIBONUCLEOSIDE-DIPHOSPHATE REDUCTASE SUBUNIT M2"/>
    <property type="match status" value="1"/>
</dbReference>
<dbReference type="Pfam" id="PF00268">
    <property type="entry name" value="Ribonuc_red_sm"/>
    <property type="match status" value="1"/>
</dbReference>
<dbReference type="SUPFAM" id="SSF47240">
    <property type="entry name" value="Ferritin-like"/>
    <property type="match status" value="1"/>
</dbReference>
<organism>
    <name type="scientific">Mycoplasma pneumoniae (strain ATCC 29342 / M129 / Subtype 1)</name>
    <name type="common">Mycoplasmoides pneumoniae</name>
    <dbReference type="NCBI Taxonomy" id="272634"/>
    <lineage>
        <taxon>Bacteria</taxon>
        <taxon>Bacillati</taxon>
        <taxon>Mycoplasmatota</taxon>
        <taxon>Mycoplasmoidales</taxon>
        <taxon>Mycoplasmoidaceae</taxon>
        <taxon>Mycoplasmoides</taxon>
    </lineage>
</organism>
<name>RIR2_MYCPN</name>
<gene>
    <name type="primary">nrdF</name>
    <name type="ordered locus">MPN_322</name>
    <name type="ORF">MP514</name>
</gene>
<protein>
    <recommendedName>
        <fullName>Ribonucleoside-diphosphate reductase subunit beta</fullName>
        <ecNumber>1.17.4.1</ecNumber>
    </recommendedName>
    <alternativeName>
        <fullName>Ribonucleotide reductase small subunit</fullName>
    </alternativeName>
</protein>
<proteinExistence type="inferred from homology"/>
<accession>P75461</accession>
<reference key="1">
    <citation type="journal article" date="1996" name="Nucleic Acids Res.">
        <title>Complete sequence analysis of the genome of the bacterium Mycoplasma pneumoniae.</title>
        <authorList>
            <person name="Himmelreich R."/>
            <person name="Hilbert H."/>
            <person name="Plagens H."/>
            <person name="Pirkl E."/>
            <person name="Li B.-C."/>
            <person name="Herrmann R."/>
        </authorList>
    </citation>
    <scope>NUCLEOTIDE SEQUENCE [LARGE SCALE GENOMIC DNA]</scope>
    <source>
        <strain>ATCC 29342 / M129 / Subtype 1</strain>
    </source>
</reference>